<keyword id="KW-0217">Developmental protein</keyword>
<keyword id="KW-0238">DNA-binding</keyword>
<keyword id="KW-0539">Nucleus</keyword>
<keyword id="KW-0597">Phosphoprotein</keyword>
<keyword id="KW-1185">Reference proteome</keyword>
<keyword id="KW-0677">Repeat</keyword>
<keyword id="KW-0804">Transcription</keyword>
<keyword id="KW-0805">Transcription regulation</keyword>
<dbReference type="EMBL" id="CR761393">
    <property type="protein sequence ID" value="CAJ83650.1"/>
    <property type="molecule type" value="mRNA"/>
</dbReference>
<dbReference type="EMBL" id="BC160510">
    <property type="protein sequence ID" value="AAI60510.1"/>
    <property type="molecule type" value="mRNA"/>
</dbReference>
<dbReference type="RefSeq" id="NP_001016339.1">
    <property type="nucleotide sequence ID" value="NM_001016339.3"/>
</dbReference>
<dbReference type="RefSeq" id="XP_012818447.1">
    <property type="nucleotide sequence ID" value="XM_012962993.3"/>
</dbReference>
<dbReference type="SMR" id="Q28GG8"/>
<dbReference type="FunCoup" id="Q28GG8">
    <property type="interactions" value="3526"/>
</dbReference>
<dbReference type="STRING" id="8364.ENSXETP00000007839"/>
<dbReference type="PaxDb" id="8364-ENSXETP00000018725"/>
<dbReference type="GeneID" id="549093"/>
<dbReference type="KEGG" id="xtr:549093"/>
<dbReference type="AGR" id="Xenbase:XB-GENE-488470"/>
<dbReference type="CTD" id="6908"/>
<dbReference type="Xenbase" id="XB-GENE-488470">
    <property type="gene designation" value="tbp"/>
</dbReference>
<dbReference type="eggNOG" id="KOG3302">
    <property type="taxonomic scope" value="Eukaryota"/>
</dbReference>
<dbReference type="HOGENOM" id="CLU_060161_1_1_1"/>
<dbReference type="InParanoid" id="Q28GG8"/>
<dbReference type="OMA" id="HMMPMSE"/>
<dbReference type="OrthoDB" id="2127950at2759"/>
<dbReference type="PhylomeDB" id="Q28GG8"/>
<dbReference type="Reactome" id="R-XTR-674695">
    <property type="pathway name" value="RNA Polymerase II Pre-transcription Events"/>
</dbReference>
<dbReference type="Reactome" id="R-XTR-6804756">
    <property type="pathway name" value="Regulation of TP53 Activity through Phosphorylation"/>
</dbReference>
<dbReference type="Reactome" id="R-XTR-6807505">
    <property type="pathway name" value="RNA polymerase II transcribes snRNA genes"/>
</dbReference>
<dbReference type="Reactome" id="R-XTR-73762">
    <property type="pathway name" value="RNA Polymerase I Transcription Initiation"/>
</dbReference>
<dbReference type="Reactome" id="R-XTR-73772">
    <property type="pathway name" value="RNA Polymerase I Promoter Escape"/>
</dbReference>
<dbReference type="Reactome" id="R-XTR-73776">
    <property type="pathway name" value="RNA Polymerase II Promoter Escape"/>
</dbReference>
<dbReference type="Reactome" id="R-XTR-73779">
    <property type="pathway name" value="RNA Polymerase II Transcription Pre-Initiation And Promoter Opening"/>
</dbReference>
<dbReference type="Reactome" id="R-XTR-73863">
    <property type="pathway name" value="RNA Polymerase I Transcription Termination"/>
</dbReference>
<dbReference type="Reactome" id="R-XTR-75953">
    <property type="pathway name" value="RNA Polymerase II Transcription Initiation"/>
</dbReference>
<dbReference type="Reactome" id="R-XTR-76042">
    <property type="pathway name" value="RNA Polymerase II Transcription Initiation And Promoter Clearance"/>
</dbReference>
<dbReference type="Reactome" id="R-XTR-76061">
    <property type="pathway name" value="RNA Polymerase III Transcription Initiation From Type 1 Promoter"/>
</dbReference>
<dbReference type="Reactome" id="R-XTR-76066">
    <property type="pathway name" value="RNA Polymerase III Transcription Initiation From Type 2 Promoter"/>
</dbReference>
<dbReference type="Reactome" id="R-XTR-9018519">
    <property type="pathway name" value="Estrogen-dependent gene expression"/>
</dbReference>
<dbReference type="Proteomes" id="UP000008143">
    <property type="component" value="Chromosome 5"/>
</dbReference>
<dbReference type="Bgee" id="ENSXETG00000008556">
    <property type="expression patterns" value="Expressed in egg cell and 13 other cell types or tissues"/>
</dbReference>
<dbReference type="GO" id="GO:0005634">
    <property type="term" value="C:nucleus"/>
    <property type="evidence" value="ECO:0000250"/>
    <property type="project" value="UniProtKB"/>
</dbReference>
<dbReference type="GO" id="GO:0005669">
    <property type="term" value="C:transcription factor TFIID complex"/>
    <property type="evidence" value="ECO:0000250"/>
    <property type="project" value="UniProtKB"/>
</dbReference>
<dbReference type="GO" id="GO:0003677">
    <property type="term" value="F:DNA binding"/>
    <property type="evidence" value="ECO:0000314"/>
    <property type="project" value="UniProtKB"/>
</dbReference>
<dbReference type="GO" id="GO:0000995">
    <property type="term" value="F:RNA polymerase III general transcription initiation factor activity"/>
    <property type="evidence" value="ECO:0000250"/>
    <property type="project" value="UniProtKB"/>
</dbReference>
<dbReference type="GO" id="GO:0006352">
    <property type="term" value="P:DNA-templated transcription initiation"/>
    <property type="evidence" value="ECO:0007669"/>
    <property type="project" value="InterPro"/>
</dbReference>
<dbReference type="GO" id="GO:0009792">
    <property type="term" value="P:embryo development ending in birth or egg hatching"/>
    <property type="evidence" value="ECO:0000250"/>
    <property type="project" value="UniProtKB"/>
</dbReference>
<dbReference type="GO" id="GO:0006366">
    <property type="term" value="P:transcription by RNA polymerase II"/>
    <property type="evidence" value="ECO:0000250"/>
    <property type="project" value="UniProtKB"/>
</dbReference>
<dbReference type="GO" id="GO:0006383">
    <property type="term" value="P:transcription by RNA polymerase III"/>
    <property type="evidence" value="ECO:0000250"/>
    <property type="project" value="UniProtKB"/>
</dbReference>
<dbReference type="CDD" id="cd04516">
    <property type="entry name" value="TBP_eukaryotes"/>
    <property type="match status" value="1"/>
</dbReference>
<dbReference type="FunFam" id="3.30.310.10:FF:000001">
    <property type="entry name" value="TATA-box-binding protein 2"/>
    <property type="match status" value="1"/>
</dbReference>
<dbReference type="FunFam" id="3.30.310.10:FF:000002">
    <property type="entry name" value="TATA-box-binding protein 2"/>
    <property type="match status" value="1"/>
</dbReference>
<dbReference type="Gene3D" id="3.30.310.10">
    <property type="entry name" value="TATA-Binding Protein"/>
    <property type="match status" value="2"/>
</dbReference>
<dbReference type="HAMAP" id="MF_00408">
    <property type="entry name" value="TATA_bind_prot_arch"/>
    <property type="match status" value="1"/>
</dbReference>
<dbReference type="InterPro" id="IPR000814">
    <property type="entry name" value="TBP"/>
</dbReference>
<dbReference type="InterPro" id="IPR030491">
    <property type="entry name" value="TBP_CS"/>
</dbReference>
<dbReference type="InterPro" id="IPR012295">
    <property type="entry name" value="TBP_dom_sf"/>
</dbReference>
<dbReference type="InterPro" id="IPR033710">
    <property type="entry name" value="TBP_eukaryotic"/>
</dbReference>
<dbReference type="PANTHER" id="PTHR10126">
    <property type="entry name" value="TATA-BOX BINDING PROTEIN"/>
    <property type="match status" value="1"/>
</dbReference>
<dbReference type="Pfam" id="PF00352">
    <property type="entry name" value="TBP"/>
    <property type="match status" value="2"/>
</dbReference>
<dbReference type="PRINTS" id="PR00686">
    <property type="entry name" value="TIFACTORIID"/>
</dbReference>
<dbReference type="SUPFAM" id="SSF55945">
    <property type="entry name" value="TATA-box binding protein-like"/>
    <property type="match status" value="2"/>
</dbReference>
<dbReference type="PROSITE" id="PS00351">
    <property type="entry name" value="TFIID"/>
    <property type="match status" value="2"/>
</dbReference>
<reference evidence="8" key="1">
    <citation type="submission" date="2006-10" db="EMBL/GenBank/DDBJ databases">
        <authorList>
            <consortium name="Sanger Xenopus tropicalis EST/cDNA project"/>
        </authorList>
    </citation>
    <scope>NUCLEOTIDE SEQUENCE [LARGE SCALE MRNA]</scope>
    <source>
        <tissue evidence="8">Egg</tissue>
    </source>
</reference>
<reference evidence="8" key="2">
    <citation type="submission" date="2008-03" db="EMBL/GenBank/DDBJ databases">
        <authorList>
            <consortium name="NIH - Xenopus Gene Collection (XGC) project"/>
        </authorList>
    </citation>
    <scope>NUCLEOTIDE SEQUENCE [LARGE SCALE MRNA]</scope>
    <source>
        <tissue evidence="7">Embryo</tissue>
    </source>
</reference>
<reference evidence="6" key="3">
    <citation type="journal article" date="2007" name="EMBO J.">
        <title>TBP paralogs accommodate metazoan- and vertebrate-specific developmental gene regulation.</title>
        <authorList>
            <person name="Jacobi U.G."/>
            <person name="Akkers R.C."/>
            <person name="Pierson E.S."/>
            <person name="Weeks D.L."/>
            <person name="Dagle J.M."/>
            <person name="Veenstra G.J.C."/>
        </authorList>
    </citation>
    <scope>FUNCTION</scope>
</reference>
<sequence>MDQNNSIPPFQGLASPQGSLTPGINIFSPLMPYGTGLTPQPVQTTNSLSILEEQQRQQQQAQQSTSQQGNQGSGQTPQLFHPQTLTTAPLPGNTPLYPSPMTPMTPITPATPASESSGIVPQLQNIVSTVNLGCKLDLKTIALRARNAEYNPKRFAAVIMRIREPRTTALIFSSGKMVCTGAKSEEQSRLAARKYARVVQKLGFPAKFLDFKIQNMVGSCDVKFPIRLEGLVLTHQQFSSYEPELFPGLIYRMIKPRIVLLIFVSGKVVLTGAKVRAEIYEAFENIYPILKGFRKTT</sequence>
<organism>
    <name type="scientific">Xenopus tropicalis</name>
    <name type="common">Western clawed frog</name>
    <name type="synonym">Silurana tropicalis</name>
    <dbReference type="NCBI Taxonomy" id="8364"/>
    <lineage>
        <taxon>Eukaryota</taxon>
        <taxon>Metazoa</taxon>
        <taxon>Chordata</taxon>
        <taxon>Craniata</taxon>
        <taxon>Vertebrata</taxon>
        <taxon>Euteleostomi</taxon>
        <taxon>Amphibia</taxon>
        <taxon>Batrachia</taxon>
        <taxon>Anura</taxon>
        <taxon>Pipoidea</taxon>
        <taxon>Pipidae</taxon>
        <taxon>Xenopodinae</taxon>
        <taxon>Xenopus</taxon>
        <taxon>Silurana</taxon>
    </lineage>
</organism>
<accession>Q28GG8</accession>
<protein>
    <recommendedName>
        <fullName evidence="2">TATA-box-binding protein</fullName>
    </recommendedName>
    <alternativeName>
        <fullName evidence="2">TATA sequence-binding protein</fullName>
    </alternativeName>
    <alternativeName>
        <fullName evidence="2">TATA-binding factor</fullName>
    </alternativeName>
    <alternativeName>
        <fullName evidence="2">TATA-box factor</fullName>
    </alternativeName>
    <alternativeName>
        <fullName evidence="2">Transcription initiation factor TFIID TBP subunit</fullName>
    </alternativeName>
</protein>
<name>TBP_XENTR</name>
<feature type="chain" id="PRO_0000348609" description="TATA-box-binding protein">
    <location>
        <begin position="1"/>
        <end position="297"/>
    </location>
</feature>
<feature type="repeat" description="1" evidence="3">
    <location>
        <begin position="123"/>
        <end position="199"/>
    </location>
</feature>
<feature type="repeat" description="2" evidence="3">
    <location>
        <begin position="213"/>
        <end position="290"/>
    </location>
</feature>
<feature type="region of interest" description="Disordered" evidence="4">
    <location>
        <begin position="52"/>
        <end position="116"/>
    </location>
</feature>
<feature type="compositionally biased region" description="Low complexity" evidence="4">
    <location>
        <begin position="56"/>
        <end position="78"/>
    </location>
</feature>
<feature type="compositionally biased region" description="Low complexity" evidence="4">
    <location>
        <begin position="104"/>
        <end position="114"/>
    </location>
</feature>
<comment type="function">
    <text evidence="2 5">General transcription factor that functions at the core of the DNA-binding multiprotein factor TFIID. Binding of TFIID to the TATA box is the initial transcriptional step of the pre-initiation complex (PIC), playing a role in the activation of eukaryotic genes transcribed by RNA polymerase II. Members of the TBP family are differentially required to regulate transcription and development during early embryogenesis (By similarity). Binds to the promoters of select genes.</text>
</comment>
<comment type="subunit">
    <text evidence="1">Belongs to the TFIID complex together with the TBP-associated factors (TAFs). Binds DNA as monomer.</text>
</comment>
<comment type="subcellular location">
    <subcellularLocation>
        <location evidence="1">Nucleus</location>
    </subcellularLocation>
</comment>
<comment type="PTM">
    <text evidence="2">The N-terminal domain is extensively phosphorylated.</text>
</comment>
<comment type="similarity">
    <text evidence="3">Belongs to the TBP family.</text>
</comment>
<gene>
    <name evidence="8" type="primary">tbp</name>
    <name evidence="2" type="synonym">tfiid</name>
    <name type="ORF">TEgg042d23.1</name>
</gene>
<proteinExistence type="evidence at transcript level"/>
<evidence type="ECO:0000250" key="1">
    <source>
        <dbReference type="UniProtKB" id="P20226"/>
    </source>
</evidence>
<evidence type="ECO:0000250" key="2">
    <source>
        <dbReference type="UniProtKB" id="P27633"/>
    </source>
</evidence>
<evidence type="ECO:0000255" key="3"/>
<evidence type="ECO:0000256" key="4">
    <source>
        <dbReference type="SAM" id="MobiDB-lite"/>
    </source>
</evidence>
<evidence type="ECO:0000269" key="5">
    <source>
    </source>
</evidence>
<evidence type="ECO:0000305" key="6"/>
<evidence type="ECO:0000312" key="7">
    <source>
        <dbReference type="EMBL" id="AAI60510.1"/>
    </source>
</evidence>
<evidence type="ECO:0000312" key="8">
    <source>
        <dbReference type="EMBL" id="CAJ83650.1"/>
    </source>
</evidence>